<organism>
    <name type="scientific">Methanococcus maripaludis (strain C5 / ATCC BAA-1333)</name>
    <dbReference type="NCBI Taxonomy" id="402880"/>
    <lineage>
        <taxon>Archaea</taxon>
        <taxon>Methanobacteriati</taxon>
        <taxon>Methanobacteriota</taxon>
        <taxon>Methanomada group</taxon>
        <taxon>Methanococci</taxon>
        <taxon>Methanococcales</taxon>
        <taxon>Methanococcaceae</taxon>
        <taxon>Methanococcus</taxon>
    </lineage>
</organism>
<proteinExistence type="inferred from homology"/>
<name>Y151_METM5</name>
<evidence type="ECO:0000255" key="1">
    <source>
        <dbReference type="HAMAP-Rule" id="MF_01221"/>
    </source>
</evidence>
<comment type="similarity">
    <text evidence="1">Belongs to the UPF0210 family.</text>
</comment>
<dbReference type="EMBL" id="CP000609">
    <property type="protein sequence ID" value="ABO34468.1"/>
    <property type="molecule type" value="Genomic_DNA"/>
</dbReference>
<dbReference type="RefSeq" id="WP_011867928.1">
    <property type="nucleotide sequence ID" value="NC_009135.1"/>
</dbReference>
<dbReference type="SMR" id="A4FW97"/>
<dbReference type="STRING" id="402880.MmarC5_0151"/>
<dbReference type="GeneID" id="4927855"/>
<dbReference type="KEGG" id="mmq:MmarC5_0151"/>
<dbReference type="eggNOG" id="arCOG04321">
    <property type="taxonomic scope" value="Archaea"/>
</dbReference>
<dbReference type="HOGENOM" id="CLU_048704_0_0_2"/>
<dbReference type="OrthoDB" id="21376at2157"/>
<dbReference type="Proteomes" id="UP000000253">
    <property type="component" value="Chromosome"/>
</dbReference>
<dbReference type="CDD" id="cd08025">
    <property type="entry name" value="RNR_PFL_like_DUF711"/>
    <property type="match status" value="1"/>
</dbReference>
<dbReference type="Gene3D" id="3.20.70.20">
    <property type="match status" value="1"/>
</dbReference>
<dbReference type="HAMAP" id="MF_01221">
    <property type="entry name" value="UPF0210"/>
    <property type="match status" value="1"/>
</dbReference>
<dbReference type="InterPro" id="IPR007841">
    <property type="entry name" value="UPF0210"/>
</dbReference>
<dbReference type="NCBIfam" id="NF003700">
    <property type="entry name" value="PRK05313.1"/>
    <property type="match status" value="1"/>
</dbReference>
<dbReference type="PANTHER" id="PTHR37560:SF1">
    <property type="entry name" value="UPF0210 PROTEIN MJ1665"/>
    <property type="match status" value="1"/>
</dbReference>
<dbReference type="PANTHER" id="PTHR37560">
    <property type="entry name" value="UPF0210 PROTEIN SPR0218"/>
    <property type="match status" value="1"/>
</dbReference>
<dbReference type="Pfam" id="PF05167">
    <property type="entry name" value="DUF711"/>
    <property type="match status" value="1"/>
</dbReference>
<dbReference type="SUPFAM" id="SSF51998">
    <property type="entry name" value="PFL-like glycyl radical enzymes"/>
    <property type="match status" value="1"/>
</dbReference>
<accession>A4FW97</accession>
<reference key="1">
    <citation type="submission" date="2007-03" db="EMBL/GenBank/DDBJ databases">
        <title>Complete sequence of chromosome of Methanococcus maripaludis C5.</title>
        <authorList>
            <consortium name="US DOE Joint Genome Institute"/>
            <person name="Copeland A."/>
            <person name="Lucas S."/>
            <person name="Lapidus A."/>
            <person name="Barry K."/>
            <person name="Glavina del Rio T."/>
            <person name="Dalin E."/>
            <person name="Tice H."/>
            <person name="Pitluck S."/>
            <person name="Chertkov O."/>
            <person name="Brettin T."/>
            <person name="Bruce D."/>
            <person name="Han C."/>
            <person name="Detter J.C."/>
            <person name="Schmutz J."/>
            <person name="Larimer F."/>
            <person name="Land M."/>
            <person name="Hauser L."/>
            <person name="Kyrpides N."/>
            <person name="Mikhailova N."/>
            <person name="Sieprawska-Lupa M."/>
            <person name="Whitman W.B."/>
            <person name="Richardson P."/>
        </authorList>
    </citation>
    <scope>NUCLEOTIDE SEQUENCE [LARGE SCALE GENOMIC DNA]</scope>
    <source>
        <strain>C5 / ATCC BAA-1333</strain>
    </source>
</reference>
<feature type="chain" id="PRO_1000066765" description="UPF0210 protein MmarC5_0151">
    <location>
        <begin position="1"/>
        <end position="458"/>
    </location>
</feature>
<gene>
    <name type="ordered locus">MmarC5_0151</name>
</gene>
<protein>
    <recommendedName>
        <fullName evidence="1">UPF0210 protein MmarC5_0151</fullName>
    </recommendedName>
</protein>
<sequence length="458" mass="47977">MYVPEEIIETIKMIEYQNLDIRTTTLGVNLKDCADKDLDLLKENIYNKITSYGGNLVETANKVSQKYGIPIVNKRISVTPIGLIMGSTLKGLSNEEAVDACVEVGITLDNIAKEVGVDFIGGYSALVQKRATPEEKMLIRSIPKLMTKTDRVCASVNVATTKAGINMYAVKKMGEIVKETSEITKDAIGCAKIVVFCNAPEDNPFMAGAFHGPGEGDAVINAGVSGPGVVRAVVEQLKGKDIGTVSDEIKKTAFKITRMGELVGKEVASELGVDFGIVDLSLAPTPAIGDSIANILEAVGLERCGTHGTTAALAMLNDAVKKGGAMASSNVGGLSGAFIPVSEDAGMIEAVEVGALRLEKLEAMTCVCSVGLDMIAVPGKTPASTLSAIIADEMAIGMINKKTTAVRIIPVPGKDVGDSVEYGGLLGTAPIMPVSEFSSEELIERGGRIPAPIQSLTN</sequence>